<protein>
    <recommendedName>
        <fullName evidence="1">3-isopropylmalate dehydratase large subunit</fullName>
        <ecNumber evidence="1">4.2.1.33</ecNumber>
    </recommendedName>
    <alternativeName>
        <fullName evidence="1">Alpha-IPM isomerase</fullName>
        <shortName evidence="1">IPMI</shortName>
    </alternativeName>
    <alternativeName>
        <fullName evidence="1">Isopropylmalate isomerase</fullName>
    </alternativeName>
</protein>
<organism>
    <name type="scientific">Geotalea uraniireducens (strain Rf4)</name>
    <name type="common">Geobacter uraniireducens</name>
    <dbReference type="NCBI Taxonomy" id="351605"/>
    <lineage>
        <taxon>Bacteria</taxon>
        <taxon>Pseudomonadati</taxon>
        <taxon>Thermodesulfobacteriota</taxon>
        <taxon>Desulfuromonadia</taxon>
        <taxon>Geobacterales</taxon>
        <taxon>Geobacteraceae</taxon>
        <taxon>Geotalea</taxon>
    </lineage>
</organism>
<comment type="function">
    <text evidence="1">Catalyzes the isomerization between 2-isopropylmalate and 3-isopropylmalate, via the formation of 2-isopropylmaleate.</text>
</comment>
<comment type="catalytic activity">
    <reaction evidence="1">
        <text>(2R,3S)-3-isopropylmalate = (2S)-2-isopropylmalate</text>
        <dbReference type="Rhea" id="RHEA:32287"/>
        <dbReference type="ChEBI" id="CHEBI:1178"/>
        <dbReference type="ChEBI" id="CHEBI:35121"/>
        <dbReference type="EC" id="4.2.1.33"/>
    </reaction>
</comment>
<comment type="cofactor">
    <cofactor evidence="1">
        <name>[4Fe-4S] cluster</name>
        <dbReference type="ChEBI" id="CHEBI:49883"/>
    </cofactor>
    <text evidence="1">Binds 1 [4Fe-4S] cluster per subunit.</text>
</comment>
<comment type="pathway">
    <text evidence="1">Amino-acid biosynthesis; L-leucine biosynthesis; L-leucine from 3-methyl-2-oxobutanoate: step 2/4.</text>
</comment>
<comment type="subunit">
    <text evidence="1">Heterodimer of LeuC and LeuD.</text>
</comment>
<comment type="similarity">
    <text evidence="1">Belongs to the aconitase/IPM isomerase family. LeuC type 2 subfamily.</text>
</comment>
<gene>
    <name evidence="1" type="primary">leuC</name>
    <name type="ordered locus">Gura_3709</name>
</gene>
<proteinExistence type="inferred from homology"/>
<keyword id="KW-0004">4Fe-4S</keyword>
<keyword id="KW-0028">Amino-acid biosynthesis</keyword>
<keyword id="KW-0100">Branched-chain amino acid biosynthesis</keyword>
<keyword id="KW-0408">Iron</keyword>
<keyword id="KW-0411">Iron-sulfur</keyword>
<keyword id="KW-0432">Leucine biosynthesis</keyword>
<keyword id="KW-0456">Lyase</keyword>
<keyword id="KW-0479">Metal-binding</keyword>
<keyword id="KW-1185">Reference proteome</keyword>
<evidence type="ECO:0000255" key="1">
    <source>
        <dbReference type="HAMAP-Rule" id="MF_01027"/>
    </source>
</evidence>
<name>LEUC_GEOUR</name>
<reference key="1">
    <citation type="submission" date="2007-05" db="EMBL/GenBank/DDBJ databases">
        <title>Complete sequence of Geobacter uraniireducens Rf4.</title>
        <authorList>
            <consortium name="US DOE Joint Genome Institute"/>
            <person name="Copeland A."/>
            <person name="Lucas S."/>
            <person name="Lapidus A."/>
            <person name="Barry K."/>
            <person name="Detter J.C."/>
            <person name="Glavina del Rio T."/>
            <person name="Hammon N."/>
            <person name="Israni S."/>
            <person name="Dalin E."/>
            <person name="Tice H."/>
            <person name="Pitluck S."/>
            <person name="Chertkov O."/>
            <person name="Brettin T."/>
            <person name="Bruce D."/>
            <person name="Han C."/>
            <person name="Schmutz J."/>
            <person name="Larimer F."/>
            <person name="Land M."/>
            <person name="Hauser L."/>
            <person name="Kyrpides N."/>
            <person name="Mikhailova N."/>
            <person name="Shelobolina E."/>
            <person name="Aklujkar M."/>
            <person name="Lovley D."/>
            <person name="Richardson P."/>
        </authorList>
    </citation>
    <scope>NUCLEOTIDE SEQUENCE [LARGE SCALE GENOMIC DNA]</scope>
    <source>
        <strain>ATCC BAA-1134 / JCM 13001 / Rf4</strain>
    </source>
</reference>
<feature type="chain" id="PRO_1000084238" description="3-isopropylmalate dehydratase large subunit">
    <location>
        <begin position="1"/>
        <end position="427"/>
    </location>
</feature>
<feature type="binding site" evidence="1">
    <location>
        <position position="308"/>
    </location>
    <ligand>
        <name>[4Fe-4S] cluster</name>
        <dbReference type="ChEBI" id="CHEBI:49883"/>
    </ligand>
</feature>
<feature type="binding site" evidence="1">
    <location>
        <position position="368"/>
    </location>
    <ligand>
        <name>[4Fe-4S] cluster</name>
        <dbReference type="ChEBI" id="CHEBI:49883"/>
    </ligand>
</feature>
<feature type="binding site" evidence="1">
    <location>
        <position position="371"/>
    </location>
    <ligand>
        <name>[4Fe-4S] cluster</name>
        <dbReference type="ChEBI" id="CHEBI:49883"/>
    </ligand>
</feature>
<sequence>MGMTIAEKIFAAHLVDEPFHGTRVLKLDVVMCHEITTPIAIADLIARGKDRVFDTSRIKAVIDHVTPSKDSKTATQAKMLRDWARRHNIKDFFDIGANGVCHALFPEKGFIRPGYTVIMGDSHTCTHGAFGAFAAGVGTTDLEVGILKGVCAFREPKTIRINLNGKLPKGVYAKDAILHVIGRLGVNGATDRVIEFRGAVVDAMTMESRMTLCNMAIEAGGTSGICMPDSVTVDYLWPFISEDYASKEAALVEFKKWWSDEDAVYERVLDLDISGLEPVVTFGYKPDQVKTITEMAGTPVDQVYLGSCTNGRLEDLRVAAEILKGKKIAPTVRAILSPATPKVYSDALHEGLIDIFMEAGFCVTNPTCGACLGMSNGVLAEGEVCASTTNRNFMGRMGKGGMVHLMSPATSAATAIEGKMADPRKYL</sequence>
<dbReference type="EC" id="4.2.1.33" evidence="1"/>
<dbReference type="EMBL" id="CP000698">
    <property type="protein sequence ID" value="ABQ27862.1"/>
    <property type="molecule type" value="Genomic_DNA"/>
</dbReference>
<dbReference type="RefSeq" id="WP_011940513.1">
    <property type="nucleotide sequence ID" value="NC_009483.1"/>
</dbReference>
<dbReference type="SMR" id="A5G7U4"/>
<dbReference type="STRING" id="351605.Gura_3709"/>
<dbReference type="KEGG" id="gur:Gura_3709"/>
<dbReference type="HOGENOM" id="CLU_006714_3_4_7"/>
<dbReference type="OrthoDB" id="9764318at2"/>
<dbReference type="UniPathway" id="UPA00048">
    <property type="reaction ID" value="UER00071"/>
</dbReference>
<dbReference type="Proteomes" id="UP000006695">
    <property type="component" value="Chromosome"/>
</dbReference>
<dbReference type="GO" id="GO:0003861">
    <property type="term" value="F:3-isopropylmalate dehydratase activity"/>
    <property type="evidence" value="ECO:0007669"/>
    <property type="project" value="UniProtKB-UniRule"/>
</dbReference>
<dbReference type="GO" id="GO:0051539">
    <property type="term" value="F:4 iron, 4 sulfur cluster binding"/>
    <property type="evidence" value="ECO:0007669"/>
    <property type="project" value="UniProtKB-KW"/>
</dbReference>
<dbReference type="GO" id="GO:0046872">
    <property type="term" value="F:metal ion binding"/>
    <property type="evidence" value="ECO:0007669"/>
    <property type="project" value="UniProtKB-KW"/>
</dbReference>
<dbReference type="GO" id="GO:0009098">
    <property type="term" value="P:L-leucine biosynthetic process"/>
    <property type="evidence" value="ECO:0007669"/>
    <property type="project" value="UniProtKB-UniRule"/>
</dbReference>
<dbReference type="CDD" id="cd01583">
    <property type="entry name" value="IPMI"/>
    <property type="match status" value="1"/>
</dbReference>
<dbReference type="Gene3D" id="3.30.499.10">
    <property type="entry name" value="Aconitase, domain 3"/>
    <property type="match status" value="2"/>
</dbReference>
<dbReference type="HAMAP" id="MF_01027">
    <property type="entry name" value="LeuC_type2"/>
    <property type="match status" value="1"/>
</dbReference>
<dbReference type="InterPro" id="IPR015931">
    <property type="entry name" value="Acnase/IPM_dHydase_lsu_aba_1/3"/>
</dbReference>
<dbReference type="InterPro" id="IPR001030">
    <property type="entry name" value="Acoase/IPM_deHydtase_lsu_aba"/>
</dbReference>
<dbReference type="InterPro" id="IPR018136">
    <property type="entry name" value="Aconitase_4Fe-4S_BS"/>
</dbReference>
<dbReference type="InterPro" id="IPR036008">
    <property type="entry name" value="Aconitase_4Fe-4S_dom"/>
</dbReference>
<dbReference type="InterPro" id="IPR011826">
    <property type="entry name" value="HAcnase/IPMdehydase_lsu_prok"/>
</dbReference>
<dbReference type="InterPro" id="IPR006251">
    <property type="entry name" value="Homoacnase/IPMdehydase_lsu"/>
</dbReference>
<dbReference type="InterPro" id="IPR050067">
    <property type="entry name" value="IPM_dehydratase_rel_enz"/>
</dbReference>
<dbReference type="InterPro" id="IPR033941">
    <property type="entry name" value="IPMI_cat"/>
</dbReference>
<dbReference type="NCBIfam" id="TIGR01343">
    <property type="entry name" value="hacA_fam"/>
    <property type="match status" value="1"/>
</dbReference>
<dbReference type="NCBIfam" id="TIGR02086">
    <property type="entry name" value="IPMI_arch"/>
    <property type="match status" value="1"/>
</dbReference>
<dbReference type="NCBIfam" id="NF001614">
    <property type="entry name" value="PRK00402.1"/>
    <property type="match status" value="1"/>
</dbReference>
<dbReference type="PANTHER" id="PTHR43822:SF16">
    <property type="entry name" value="3-ISOPROPYLMALATE DEHYDRATASE LARGE SUBUNIT 2"/>
    <property type="match status" value="1"/>
</dbReference>
<dbReference type="PANTHER" id="PTHR43822">
    <property type="entry name" value="HOMOACONITASE, MITOCHONDRIAL-RELATED"/>
    <property type="match status" value="1"/>
</dbReference>
<dbReference type="Pfam" id="PF00330">
    <property type="entry name" value="Aconitase"/>
    <property type="match status" value="2"/>
</dbReference>
<dbReference type="PRINTS" id="PR00415">
    <property type="entry name" value="ACONITASE"/>
</dbReference>
<dbReference type="SUPFAM" id="SSF53732">
    <property type="entry name" value="Aconitase iron-sulfur domain"/>
    <property type="match status" value="1"/>
</dbReference>
<dbReference type="PROSITE" id="PS00450">
    <property type="entry name" value="ACONITASE_1"/>
    <property type="match status" value="1"/>
</dbReference>
<dbReference type="PROSITE" id="PS01244">
    <property type="entry name" value="ACONITASE_2"/>
    <property type="match status" value="1"/>
</dbReference>
<accession>A5G7U4</accession>